<evidence type="ECO:0000250" key="1">
    <source>
        <dbReference type="UniProtKB" id="P04798"/>
    </source>
</evidence>
<evidence type="ECO:0000255" key="2"/>
<evidence type="ECO:0000255" key="3">
    <source>
        <dbReference type="PROSITE-ProRule" id="PRU00498"/>
    </source>
</evidence>
<evidence type="ECO:0000269" key="4">
    <source>
    </source>
</evidence>
<evidence type="ECO:0000303" key="5">
    <source>
    </source>
</evidence>
<evidence type="ECO:0000305" key="6"/>
<evidence type="ECO:0000305" key="7">
    <source>
    </source>
</evidence>
<feature type="signal peptide" evidence="2">
    <location>
        <begin position="1"/>
        <end position="18"/>
    </location>
</feature>
<feature type="chain" id="PRO_0000448921" description="Cytochrome P450 monooxygenase bfoB">
    <location>
        <begin position="19"/>
        <end position="489"/>
    </location>
</feature>
<feature type="binding site" description="axial binding residue" evidence="1">
    <location>
        <position position="429"/>
    </location>
    <ligand>
        <name>heme</name>
        <dbReference type="ChEBI" id="CHEBI:30413"/>
    </ligand>
    <ligandPart>
        <name>Fe</name>
        <dbReference type="ChEBI" id="CHEBI:18248"/>
    </ligandPart>
</feature>
<feature type="glycosylation site" description="N-linked (GlcNAc...) asparagine" evidence="3">
    <location>
        <position position="113"/>
    </location>
</feature>
<feature type="glycosylation site" description="N-linked (GlcNAc...) asparagine" evidence="3">
    <location>
        <position position="348"/>
    </location>
</feature>
<feature type="glycosylation site" description="N-linked (GlcNAc...) asparagine" evidence="3">
    <location>
        <position position="386"/>
    </location>
</feature>
<gene>
    <name evidence="5" type="primary">bfoB</name>
    <name type="ORF">ASPBRDRAFT_192866</name>
</gene>
<sequence length="489" mass="55302">MLALYLIAGLLVGLLVYRLHLDPLSHIPGPFLAKFIPICNIRMLHTGRIVFTFRELHDTYGPVVRIGPSELSFATVTAFDSIYGFEGEKKFTIYGSRRGVVSSASGTDESLGNATSKESRRKLRPLITSTLNELMASSAEEYCHLALTEQLAAHRVGQDGSTPISLSTLNYRYLWQLANMVAFGNRGQEAHRETFNPHIRWPSPFVSFIDLLFIFCSRATIQQHARTAYKAWQAIRFVCRQTTQGPQVDFIADDSTFPDNLHRRLRQAAEKAGLDDVSDFTLLVNSMILRFSVYGTSDHMINAVFYYLLRHPQCLKRLEKEVLNAGTSVEELSDNRLAKLPYLNACINETFRISPAFNGGILQRVSCGATVDGVYVPPGVAVTVDNYTLGRSKQYWENPDAFCPERWLESSDKNVFKASRPFLIGSRQCPGRQMAYQMFRILVAKLVYLYSMELVNKDFDIERDTFCGLHWADLEVDAILKPRTDVLGY</sequence>
<reference key="1">
    <citation type="journal article" date="2017" name="Genome Biol.">
        <title>Comparative genomics reveals high biological diversity and specific adaptations in the industrially and medically important fungal genus Aspergillus.</title>
        <authorList>
            <person name="de Vries R.P."/>
            <person name="Riley R."/>
            <person name="Wiebenga A."/>
            <person name="Aguilar-Osorio G."/>
            <person name="Amillis S."/>
            <person name="Uchima C.A."/>
            <person name="Anderluh G."/>
            <person name="Asadollahi M."/>
            <person name="Askin M."/>
            <person name="Barry K."/>
            <person name="Battaglia E."/>
            <person name="Bayram O."/>
            <person name="Benocci T."/>
            <person name="Braus-Stromeyer S.A."/>
            <person name="Caldana C."/>
            <person name="Canovas D."/>
            <person name="Cerqueira G.C."/>
            <person name="Chen F."/>
            <person name="Chen W."/>
            <person name="Choi C."/>
            <person name="Clum A."/>
            <person name="Dos Santos R.A."/>
            <person name="Damasio A.R."/>
            <person name="Diallinas G."/>
            <person name="Emri T."/>
            <person name="Fekete E."/>
            <person name="Flipphi M."/>
            <person name="Freyberg S."/>
            <person name="Gallo A."/>
            <person name="Gournas C."/>
            <person name="Habgood R."/>
            <person name="Hainaut M."/>
            <person name="Harispe M.L."/>
            <person name="Henrissat B."/>
            <person name="Hilden K.S."/>
            <person name="Hope R."/>
            <person name="Hossain A."/>
            <person name="Karabika E."/>
            <person name="Karaffa L."/>
            <person name="Karanyi Z."/>
            <person name="Krasevec N."/>
            <person name="Kuo A."/>
            <person name="Kusch H."/>
            <person name="LaButti K."/>
            <person name="Lagendijk E.L."/>
            <person name="Lapidus A."/>
            <person name="Levasseur A."/>
            <person name="Lindquist E."/>
            <person name="Lipzen A."/>
            <person name="Logrieco A.F."/>
            <person name="MacCabe A."/>
            <person name="Maekelae M.R."/>
            <person name="Malavazi I."/>
            <person name="Melin P."/>
            <person name="Meyer V."/>
            <person name="Mielnichuk N."/>
            <person name="Miskei M."/>
            <person name="Molnar A.P."/>
            <person name="Mule G."/>
            <person name="Ngan C.Y."/>
            <person name="Orejas M."/>
            <person name="Orosz E."/>
            <person name="Ouedraogo J.P."/>
            <person name="Overkamp K.M."/>
            <person name="Park H.-S."/>
            <person name="Perrone G."/>
            <person name="Piumi F."/>
            <person name="Punt P.J."/>
            <person name="Ram A.F."/>
            <person name="Ramon A."/>
            <person name="Rauscher S."/>
            <person name="Record E."/>
            <person name="Riano-Pachon D.M."/>
            <person name="Robert V."/>
            <person name="Roehrig J."/>
            <person name="Ruller R."/>
            <person name="Salamov A."/>
            <person name="Salih N.S."/>
            <person name="Samson R.A."/>
            <person name="Sandor E."/>
            <person name="Sanguinetti M."/>
            <person name="Schuetze T."/>
            <person name="Sepcic K."/>
            <person name="Shelest E."/>
            <person name="Sherlock G."/>
            <person name="Sophianopoulou V."/>
            <person name="Squina F.M."/>
            <person name="Sun H."/>
            <person name="Susca A."/>
            <person name="Todd R.B."/>
            <person name="Tsang A."/>
            <person name="Unkles S.E."/>
            <person name="van de Wiele N."/>
            <person name="van Rossen-Uffink D."/>
            <person name="Oliveira J.V."/>
            <person name="Vesth T.C."/>
            <person name="Visser J."/>
            <person name="Yu J.-H."/>
            <person name="Zhou M."/>
            <person name="Andersen M.R."/>
            <person name="Archer D.B."/>
            <person name="Baker S.E."/>
            <person name="Benoit I."/>
            <person name="Brakhage A.A."/>
            <person name="Braus G.H."/>
            <person name="Fischer R."/>
            <person name="Frisvad J.C."/>
            <person name="Goldman G.H."/>
            <person name="Houbraken J."/>
            <person name="Oakley B."/>
            <person name="Pocsi I."/>
            <person name="Scazzocchio C."/>
            <person name="Seiboth B."/>
            <person name="vanKuyk P.A."/>
            <person name="Wortman J."/>
            <person name="Dyer P.S."/>
            <person name="Grigoriev I.V."/>
        </authorList>
    </citation>
    <scope>NUCLEOTIDE SEQUENCE [LARGE SCALE GENOMIC DNA]</scope>
    <source>
        <strain>CBS 101740 / IMI 381727 / IBT 21946</strain>
    </source>
</reference>
<reference key="2">
    <citation type="journal article" date="2019" name="Biochemistry">
        <title>Biaryl-forming enzymes from Aspergilli exhibit substrate-dependent stereoselectivity.</title>
        <authorList>
            <person name="Obermaier S."/>
            <person name="Mueller M."/>
        </authorList>
    </citation>
    <scope>FUNCTION</scope>
    <scope>CATALYTIC ACTIVITY</scope>
    <scope>PATHWAY</scope>
</reference>
<protein>
    <recommendedName>
        <fullName evidence="5">Cytochrome P450 monooxygenase bfoB</fullName>
        <ecNumber evidence="4">1.-.-.-</ecNumber>
    </recommendedName>
    <alternativeName>
        <fullName evidence="5">Bifonsecin B biosynthesis cluster protein B</fullName>
    </alternativeName>
</protein>
<accession>A0A1L9URA0</accession>
<organism>
    <name type="scientific">Aspergillus brasiliensis (strain CBS 101740 / IMI 381727 / IBT 21946)</name>
    <dbReference type="NCBI Taxonomy" id="767769"/>
    <lineage>
        <taxon>Eukaryota</taxon>
        <taxon>Fungi</taxon>
        <taxon>Dikarya</taxon>
        <taxon>Ascomycota</taxon>
        <taxon>Pezizomycotina</taxon>
        <taxon>Eurotiomycetes</taxon>
        <taxon>Eurotiomycetidae</taxon>
        <taxon>Eurotiales</taxon>
        <taxon>Aspergillaceae</taxon>
        <taxon>Aspergillus</taxon>
        <taxon>Aspergillus subgen. Circumdati</taxon>
    </lineage>
</organism>
<name>BFOB_ASPBC</name>
<proteinExistence type="evidence at protein level"/>
<comment type="function">
    <text evidence="4 7">Cytochrome P450 monooxygenase; part of the gene cluster that mediates the biosynthesis of bifonsecin B, a dimeric gamma-naphthopyrone (PubMed:31067027). The first step in the biosynthesis of bifonsecin B is the production of gamma-naphthopyrone precursor YWA1 by the non-reducing polyketide synthase albA, via condensation of one acetyl-CoA starter unit with 6 malonyl-CoA units (PubMed:31067027). YWA1 is then methylated by bfoE at position C-6 to yield foncesin which is further methylated at position C-8 by bfoD to produce fonsecin B (Probable). A key enzyme in the biosynthetic pathway is the cytochrome P450 monooxygenase bfoB which catalyzes the oxidative dimerization of fonsecin B to bifonsecin B (PubMed:31067027). Bfob also catalyzes the oxidative dimerization of rubrofusarin B into nigerone (PubMed:31067027). The stereoselectivity of bfoB is influenced by the two natural monomeric substrates; homodimerization of fonsecin B yields a stereochemically pure biaryl, M-foncerine B, while rubrofusarin B yields a mixture of enantiomers M- and P-nigerone (PubMed:31067027).</text>
</comment>
<comment type="catalytic activity">
    <reaction evidence="4">
        <text>2 fonsecin B + NADPH + O2 + H(+) = bifonsecin B + NADP(+) + 2 H2O</text>
        <dbReference type="Rhea" id="RHEA:62784"/>
        <dbReference type="ChEBI" id="CHEBI:15377"/>
        <dbReference type="ChEBI" id="CHEBI:15378"/>
        <dbReference type="ChEBI" id="CHEBI:15379"/>
        <dbReference type="ChEBI" id="CHEBI:57783"/>
        <dbReference type="ChEBI" id="CHEBI:58349"/>
        <dbReference type="ChEBI" id="CHEBI:133825"/>
        <dbReference type="ChEBI" id="CHEBI:145921"/>
    </reaction>
    <physiologicalReaction direction="left-to-right" evidence="4">
        <dbReference type="Rhea" id="RHEA:62785"/>
    </physiologicalReaction>
</comment>
<comment type="catalytic activity">
    <reaction evidence="4">
        <text>2 rubrofusarin B + NADPH + O2 + 3 H(+) = nigerone + NADP(+) + 2 H2O</text>
        <dbReference type="Rhea" id="RHEA:62792"/>
        <dbReference type="ChEBI" id="CHEBI:15377"/>
        <dbReference type="ChEBI" id="CHEBI:15378"/>
        <dbReference type="ChEBI" id="CHEBI:15379"/>
        <dbReference type="ChEBI" id="CHEBI:57783"/>
        <dbReference type="ChEBI" id="CHEBI:58349"/>
        <dbReference type="ChEBI" id="CHEBI:145920"/>
        <dbReference type="ChEBI" id="CHEBI:145950"/>
    </reaction>
    <physiologicalReaction direction="left-to-right" evidence="4">
        <dbReference type="Rhea" id="RHEA:62793"/>
    </physiologicalReaction>
</comment>
<comment type="cofactor">
    <cofactor evidence="1">
        <name>heme</name>
        <dbReference type="ChEBI" id="CHEBI:30413"/>
    </cofactor>
</comment>
<comment type="pathway">
    <text evidence="4">Secondary metabolite biosynthesis.</text>
</comment>
<comment type="similarity">
    <text evidence="6">Belongs to the cytochrome P450 family.</text>
</comment>
<dbReference type="EC" id="1.-.-.-" evidence="4"/>
<dbReference type="EMBL" id="KV878681">
    <property type="protein sequence ID" value="OJJ74130.1"/>
    <property type="molecule type" value="Genomic_DNA"/>
</dbReference>
<dbReference type="SMR" id="A0A1L9URA0"/>
<dbReference type="STRING" id="767769.A0A1L9URA0"/>
<dbReference type="GlyCosmos" id="A0A1L9URA0">
    <property type="glycosylation" value="3 sites, No reported glycans"/>
</dbReference>
<dbReference type="VEuPathDB" id="FungiDB:ASPBRDRAFT_192866"/>
<dbReference type="OMA" id="PGRQMAY"/>
<dbReference type="OrthoDB" id="1470350at2759"/>
<dbReference type="Proteomes" id="UP000184499">
    <property type="component" value="Unassembled WGS sequence"/>
</dbReference>
<dbReference type="GO" id="GO:0020037">
    <property type="term" value="F:heme binding"/>
    <property type="evidence" value="ECO:0007669"/>
    <property type="project" value="InterPro"/>
</dbReference>
<dbReference type="GO" id="GO:0005506">
    <property type="term" value="F:iron ion binding"/>
    <property type="evidence" value="ECO:0007669"/>
    <property type="project" value="InterPro"/>
</dbReference>
<dbReference type="GO" id="GO:0004497">
    <property type="term" value="F:monooxygenase activity"/>
    <property type="evidence" value="ECO:0007669"/>
    <property type="project" value="UniProtKB-KW"/>
</dbReference>
<dbReference type="GO" id="GO:0016705">
    <property type="term" value="F:oxidoreductase activity, acting on paired donors, with incorporation or reduction of molecular oxygen"/>
    <property type="evidence" value="ECO:0007669"/>
    <property type="project" value="InterPro"/>
</dbReference>
<dbReference type="Gene3D" id="1.10.630.10">
    <property type="entry name" value="Cytochrome P450"/>
    <property type="match status" value="1"/>
</dbReference>
<dbReference type="InterPro" id="IPR001128">
    <property type="entry name" value="Cyt_P450"/>
</dbReference>
<dbReference type="InterPro" id="IPR002401">
    <property type="entry name" value="Cyt_P450_E_grp-I"/>
</dbReference>
<dbReference type="InterPro" id="IPR036396">
    <property type="entry name" value="Cyt_P450_sf"/>
</dbReference>
<dbReference type="InterPro" id="IPR050121">
    <property type="entry name" value="Cytochrome_P450_monoxygenase"/>
</dbReference>
<dbReference type="PANTHER" id="PTHR24305">
    <property type="entry name" value="CYTOCHROME P450"/>
    <property type="match status" value="1"/>
</dbReference>
<dbReference type="PANTHER" id="PTHR24305:SF162">
    <property type="entry name" value="P450, PUTATIVE (EUROFUNG)-RELATED"/>
    <property type="match status" value="1"/>
</dbReference>
<dbReference type="Pfam" id="PF00067">
    <property type="entry name" value="p450"/>
    <property type="match status" value="1"/>
</dbReference>
<dbReference type="PRINTS" id="PR00463">
    <property type="entry name" value="EP450I"/>
</dbReference>
<dbReference type="PRINTS" id="PR00385">
    <property type="entry name" value="P450"/>
</dbReference>
<dbReference type="SUPFAM" id="SSF48264">
    <property type="entry name" value="Cytochrome P450"/>
    <property type="match status" value="1"/>
</dbReference>
<keyword id="KW-0325">Glycoprotein</keyword>
<keyword id="KW-0349">Heme</keyword>
<keyword id="KW-0408">Iron</keyword>
<keyword id="KW-0479">Metal-binding</keyword>
<keyword id="KW-0503">Monooxygenase</keyword>
<keyword id="KW-0560">Oxidoreductase</keyword>
<keyword id="KW-1185">Reference proteome</keyword>
<keyword id="KW-0732">Signal</keyword>